<dbReference type="EMBL" id="CP000563">
    <property type="protein sequence ID" value="ABN63627.1"/>
    <property type="molecule type" value="Genomic_DNA"/>
</dbReference>
<dbReference type="RefSeq" id="WP_006083592.1">
    <property type="nucleotide sequence ID" value="NC_009052.1"/>
</dbReference>
<dbReference type="SMR" id="A3DA64"/>
<dbReference type="STRING" id="325240.Sbal_4162"/>
<dbReference type="GeneID" id="90572199"/>
<dbReference type="KEGG" id="sbl:Sbal_4162"/>
<dbReference type="HOGENOM" id="CLU_158491_1_2_6"/>
<dbReference type="OrthoDB" id="9815192at2"/>
<dbReference type="Proteomes" id="UP000001557">
    <property type="component" value="Chromosome"/>
</dbReference>
<dbReference type="GO" id="GO:0022625">
    <property type="term" value="C:cytosolic large ribosomal subunit"/>
    <property type="evidence" value="ECO:0007669"/>
    <property type="project" value="TreeGrafter"/>
</dbReference>
<dbReference type="GO" id="GO:0003735">
    <property type="term" value="F:structural constituent of ribosome"/>
    <property type="evidence" value="ECO:0007669"/>
    <property type="project" value="InterPro"/>
</dbReference>
<dbReference type="GO" id="GO:0006412">
    <property type="term" value="P:translation"/>
    <property type="evidence" value="ECO:0007669"/>
    <property type="project" value="UniProtKB-UniRule"/>
</dbReference>
<dbReference type="CDD" id="cd00427">
    <property type="entry name" value="Ribosomal_L29_HIP"/>
    <property type="match status" value="1"/>
</dbReference>
<dbReference type="FunFam" id="1.10.287.310:FF:000001">
    <property type="entry name" value="50S ribosomal protein L29"/>
    <property type="match status" value="1"/>
</dbReference>
<dbReference type="Gene3D" id="1.10.287.310">
    <property type="match status" value="1"/>
</dbReference>
<dbReference type="HAMAP" id="MF_00374">
    <property type="entry name" value="Ribosomal_uL29"/>
    <property type="match status" value="1"/>
</dbReference>
<dbReference type="InterPro" id="IPR050063">
    <property type="entry name" value="Ribosomal_protein_uL29"/>
</dbReference>
<dbReference type="InterPro" id="IPR001854">
    <property type="entry name" value="Ribosomal_uL29"/>
</dbReference>
<dbReference type="InterPro" id="IPR018254">
    <property type="entry name" value="Ribosomal_uL29_CS"/>
</dbReference>
<dbReference type="InterPro" id="IPR036049">
    <property type="entry name" value="Ribosomal_uL29_sf"/>
</dbReference>
<dbReference type="NCBIfam" id="TIGR00012">
    <property type="entry name" value="L29"/>
    <property type="match status" value="1"/>
</dbReference>
<dbReference type="PANTHER" id="PTHR10916">
    <property type="entry name" value="60S RIBOSOMAL PROTEIN L35/50S RIBOSOMAL PROTEIN L29"/>
    <property type="match status" value="1"/>
</dbReference>
<dbReference type="PANTHER" id="PTHR10916:SF0">
    <property type="entry name" value="LARGE RIBOSOMAL SUBUNIT PROTEIN UL29C"/>
    <property type="match status" value="1"/>
</dbReference>
<dbReference type="Pfam" id="PF00831">
    <property type="entry name" value="Ribosomal_L29"/>
    <property type="match status" value="1"/>
</dbReference>
<dbReference type="SUPFAM" id="SSF46561">
    <property type="entry name" value="Ribosomal protein L29 (L29p)"/>
    <property type="match status" value="1"/>
</dbReference>
<dbReference type="PROSITE" id="PS00579">
    <property type="entry name" value="RIBOSOMAL_L29"/>
    <property type="match status" value="1"/>
</dbReference>
<feature type="chain" id="PRO_1000007596" description="Large ribosomal subunit protein uL29">
    <location>
        <begin position="1"/>
        <end position="63"/>
    </location>
</feature>
<protein>
    <recommendedName>
        <fullName evidence="1">Large ribosomal subunit protein uL29</fullName>
    </recommendedName>
    <alternativeName>
        <fullName evidence="2">50S ribosomal protein L29</fullName>
    </alternativeName>
</protein>
<keyword id="KW-1185">Reference proteome</keyword>
<keyword id="KW-0687">Ribonucleoprotein</keyword>
<keyword id="KW-0689">Ribosomal protein</keyword>
<gene>
    <name evidence="1" type="primary">rpmC</name>
    <name type="ordered locus">Sbal_4162</name>
</gene>
<comment type="similarity">
    <text evidence="1">Belongs to the universal ribosomal protein uL29 family.</text>
</comment>
<evidence type="ECO:0000255" key="1">
    <source>
        <dbReference type="HAMAP-Rule" id="MF_00374"/>
    </source>
</evidence>
<evidence type="ECO:0000305" key="2"/>
<reference key="1">
    <citation type="submission" date="2007-02" db="EMBL/GenBank/DDBJ databases">
        <title>Complete sequence of chromosome of Shewanella baltica OS155.</title>
        <authorList>
            <consortium name="US DOE Joint Genome Institute"/>
            <person name="Copeland A."/>
            <person name="Lucas S."/>
            <person name="Lapidus A."/>
            <person name="Barry K."/>
            <person name="Detter J.C."/>
            <person name="Glavina del Rio T."/>
            <person name="Hammon N."/>
            <person name="Israni S."/>
            <person name="Dalin E."/>
            <person name="Tice H."/>
            <person name="Pitluck S."/>
            <person name="Sims D.R."/>
            <person name="Brettin T."/>
            <person name="Bruce D."/>
            <person name="Han C."/>
            <person name="Tapia R."/>
            <person name="Brainard J."/>
            <person name="Schmutz J."/>
            <person name="Larimer F."/>
            <person name="Land M."/>
            <person name="Hauser L."/>
            <person name="Kyrpides N."/>
            <person name="Mikhailova N."/>
            <person name="Brettar I."/>
            <person name="Klappenbach J."/>
            <person name="Konstantinidis K."/>
            <person name="Rodrigues J."/>
            <person name="Tiedje J."/>
            <person name="Richardson P."/>
        </authorList>
    </citation>
    <scope>NUCLEOTIDE SEQUENCE [LARGE SCALE GENOMIC DNA]</scope>
    <source>
        <strain>OS155 / ATCC BAA-1091</strain>
    </source>
</reference>
<sequence>MKASELREKSVEELNAELLGLLREQFNLRMQHATGQLTQTNQLKLVRRNIARVKTIITSKAGA</sequence>
<organism>
    <name type="scientific">Shewanella baltica (strain OS155 / ATCC BAA-1091)</name>
    <dbReference type="NCBI Taxonomy" id="325240"/>
    <lineage>
        <taxon>Bacteria</taxon>
        <taxon>Pseudomonadati</taxon>
        <taxon>Pseudomonadota</taxon>
        <taxon>Gammaproteobacteria</taxon>
        <taxon>Alteromonadales</taxon>
        <taxon>Shewanellaceae</taxon>
        <taxon>Shewanella</taxon>
    </lineage>
</organism>
<name>RL29_SHEB5</name>
<proteinExistence type="inferred from homology"/>
<accession>A3DA64</accession>